<protein>
    <recommendedName>
        <fullName evidence="1">Chorismate synthase</fullName>
        <shortName evidence="1">CS</shortName>
        <ecNumber evidence="1">4.2.3.5</ecNumber>
    </recommendedName>
    <alternativeName>
        <fullName evidence="1">5-enolpyruvylshikimate-3-phosphate phospholyase</fullName>
    </alternativeName>
</protein>
<gene>
    <name evidence="1" type="primary">aroC</name>
    <name type="ordered locus">PMM0224</name>
</gene>
<keyword id="KW-0028">Amino-acid biosynthesis</keyword>
<keyword id="KW-0057">Aromatic amino acid biosynthesis</keyword>
<keyword id="KW-0274">FAD</keyword>
<keyword id="KW-0285">Flavoprotein</keyword>
<keyword id="KW-0288">FMN</keyword>
<keyword id="KW-0456">Lyase</keyword>
<keyword id="KW-0521">NADP</keyword>
<dbReference type="EC" id="4.2.3.5" evidence="1"/>
<dbReference type="EMBL" id="BX548174">
    <property type="protein sequence ID" value="CAE18683.1"/>
    <property type="molecule type" value="Genomic_DNA"/>
</dbReference>
<dbReference type="RefSeq" id="WP_011131863.1">
    <property type="nucleotide sequence ID" value="NC_005072.1"/>
</dbReference>
<dbReference type="SMR" id="Q7V364"/>
<dbReference type="STRING" id="59919.PMM0224"/>
<dbReference type="KEGG" id="pmm:PMM0224"/>
<dbReference type="eggNOG" id="COG0082">
    <property type="taxonomic scope" value="Bacteria"/>
</dbReference>
<dbReference type="HOGENOM" id="CLU_034547_0_2_3"/>
<dbReference type="OrthoDB" id="9771806at2"/>
<dbReference type="UniPathway" id="UPA00053">
    <property type="reaction ID" value="UER00090"/>
</dbReference>
<dbReference type="Proteomes" id="UP000001026">
    <property type="component" value="Chromosome"/>
</dbReference>
<dbReference type="GO" id="GO:0005829">
    <property type="term" value="C:cytosol"/>
    <property type="evidence" value="ECO:0007669"/>
    <property type="project" value="TreeGrafter"/>
</dbReference>
<dbReference type="GO" id="GO:0004107">
    <property type="term" value="F:chorismate synthase activity"/>
    <property type="evidence" value="ECO:0007669"/>
    <property type="project" value="UniProtKB-UniRule"/>
</dbReference>
<dbReference type="GO" id="GO:0010181">
    <property type="term" value="F:FMN binding"/>
    <property type="evidence" value="ECO:0007669"/>
    <property type="project" value="TreeGrafter"/>
</dbReference>
<dbReference type="GO" id="GO:0008652">
    <property type="term" value="P:amino acid biosynthetic process"/>
    <property type="evidence" value="ECO:0007669"/>
    <property type="project" value="UniProtKB-KW"/>
</dbReference>
<dbReference type="GO" id="GO:0009073">
    <property type="term" value="P:aromatic amino acid family biosynthetic process"/>
    <property type="evidence" value="ECO:0007669"/>
    <property type="project" value="UniProtKB-KW"/>
</dbReference>
<dbReference type="GO" id="GO:0009423">
    <property type="term" value="P:chorismate biosynthetic process"/>
    <property type="evidence" value="ECO:0007669"/>
    <property type="project" value="UniProtKB-UniRule"/>
</dbReference>
<dbReference type="CDD" id="cd07304">
    <property type="entry name" value="Chorismate_synthase"/>
    <property type="match status" value="1"/>
</dbReference>
<dbReference type="FunFam" id="3.60.150.10:FF:000003">
    <property type="entry name" value="Chorismate synthase"/>
    <property type="match status" value="1"/>
</dbReference>
<dbReference type="Gene3D" id="3.60.150.10">
    <property type="entry name" value="Chorismate synthase AroC"/>
    <property type="match status" value="1"/>
</dbReference>
<dbReference type="HAMAP" id="MF_00300">
    <property type="entry name" value="Chorismate_synth"/>
    <property type="match status" value="1"/>
</dbReference>
<dbReference type="InterPro" id="IPR000453">
    <property type="entry name" value="Chorismate_synth"/>
</dbReference>
<dbReference type="InterPro" id="IPR035904">
    <property type="entry name" value="Chorismate_synth_AroC_sf"/>
</dbReference>
<dbReference type="InterPro" id="IPR020541">
    <property type="entry name" value="Chorismate_synthase_CS"/>
</dbReference>
<dbReference type="NCBIfam" id="TIGR00033">
    <property type="entry name" value="aroC"/>
    <property type="match status" value="1"/>
</dbReference>
<dbReference type="NCBIfam" id="NF003793">
    <property type="entry name" value="PRK05382.1"/>
    <property type="match status" value="1"/>
</dbReference>
<dbReference type="PANTHER" id="PTHR21085">
    <property type="entry name" value="CHORISMATE SYNTHASE"/>
    <property type="match status" value="1"/>
</dbReference>
<dbReference type="PANTHER" id="PTHR21085:SF0">
    <property type="entry name" value="CHORISMATE SYNTHASE"/>
    <property type="match status" value="1"/>
</dbReference>
<dbReference type="Pfam" id="PF01264">
    <property type="entry name" value="Chorismate_synt"/>
    <property type="match status" value="1"/>
</dbReference>
<dbReference type="PIRSF" id="PIRSF001456">
    <property type="entry name" value="Chorismate_synth"/>
    <property type="match status" value="1"/>
</dbReference>
<dbReference type="SUPFAM" id="SSF103263">
    <property type="entry name" value="Chorismate synthase, AroC"/>
    <property type="match status" value="1"/>
</dbReference>
<dbReference type="PROSITE" id="PS00787">
    <property type="entry name" value="CHORISMATE_SYNTHASE_1"/>
    <property type="match status" value="1"/>
</dbReference>
<dbReference type="PROSITE" id="PS00788">
    <property type="entry name" value="CHORISMATE_SYNTHASE_2"/>
    <property type="match status" value="1"/>
</dbReference>
<evidence type="ECO:0000255" key="1">
    <source>
        <dbReference type="HAMAP-Rule" id="MF_00300"/>
    </source>
</evidence>
<name>AROC_PROMP</name>
<feature type="chain" id="PRO_0000140630" description="Chorismate synthase">
    <location>
        <begin position="1"/>
        <end position="364"/>
    </location>
</feature>
<feature type="binding site" evidence="1">
    <location>
        <position position="47"/>
    </location>
    <ligand>
        <name>NADP(+)</name>
        <dbReference type="ChEBI" id="CHEBI:58349"/>
    </ligand>
</feature>
<feature type="binding site" evidence="1">
    <location>
        <begin position="124"/>
        <end position="126"/>
    </location>
    <ligand>
        <name>FMN</name>
        <dbReference type="ChEBI" id="CHEBI:58210"/>
    </ligand>
</feature>
<feature type="binding site" evidence="1">
    <location>
        <position position="287"/>
    </location>
    <ligand>
        <name>FMN</name>
        <dbReference type="ChEBI" id="CHEBI:58210"/>
    </ligand>
</feature>
<feature type="binding site" evidence="1">
    <location>
        <begin position="302"/>
        <end position="306"/>
    </location>
    <ligand>
        <name>FMN</name>
        <dbReference type="ChEBI" id="CHEBI:58210"/>
    </ligand>
</feature>
<feature type="binding site" evidence="1">
    <location>
        <position position="328"/>
    </location>
    <ligand>
        <name>FMN</name>
        <dbReference type="ChEBI" id="CHEBI:58210"/>
    </ligand>
</feature>
<organism>
    <name type="scientific">Prochlorococcus marinus subsp. pastoris (strain CCMP1986 / NIES-2087 / MED4)</name>
    <dbReference type="NCBI Taxonomy" id="59919"/>
    <lineage>
        <taxon>Bacteria</taxon>
        <taxon>Bacillati</taxon>
        <taxon>Cyanobacteriota</taxon>
        <taxon>Cyanophyceae</taxon>
        <taxon>Synechococcales</taxon>
        <taxon>Prochlorococcaceae</taxon>
        <taxon>Prochlorococcus</taxon>
    </lineage>
</organism>
<reference key="1">
    <citation type="journal article" date="2003" name="Nature">
        <title>Genome divergence in two Prochlorococcus ecotypes reflects oceanic niche differentiation.</title>
        <authorList>
            <person name="Rocap G."/>
            <person name="Larimer F.W."/>
            <person name="Lamerdin J.E."/>
            <person name="Malfatti S."/>
            <person name="Chain P."/>
            <person name="Ahlgren N.A."/>
            <person name="Arellano A."/>
            <person name="Coleman M."/>
            <person name="Hauser L."/>
            <person name="Hess W.R."/>
            <person name="Johnson Z.I."/>
            <person name="Land M.L."/>
            <person name="Lindell D."/>
            <person name="Post A.F."/>
            <person name="Regala W."/>
            <person name="Shah M."/>
            <person name="Shaw S.L."/>
            <person name="Steglich C."/>
            <person name="Sullivan M.B."/>
            <person name="Ting C.S."/>
            <person name="Tolonen A."/>
            <person name="Webb E.A."/>
            <person name="Zinser E.R."/>
            <person name="Chisholm S.W."/>
        </authorList>
    </citation>
    <scope>NUCLEOTIDE SEQUENCE [LARGE SCALE GENOMIC DNA]</scope>
    <source>
        <strain>CCMP1986 / NIES-2087 / MED4</strain>
    </source>
</reference>
<proteinExistence type="inferred from homology"/>
<sequence>MGSSFGKNFRVTTFGESHGGAVGVILDGCPPKLKINIDLIQNELDRRRPGQSKITTPRNEDDKLEILSGLKEGITLGTPIAMMVRNKDQRPGDYSNLEQVFRPSHADGTYHLKYGIQAGSGGGRASARETIGRVAAGAIAKQLLKNLFNTEILSWVKRIHDIDSQVNKNKLTLSKIDSNIVRCPDDKVAAKMIKRIKELQQDGDSCGGVIECLVKNVPSGLGMPVFDKLEADLAKALMSLPATKGFEIGSGFLGTYLRGSEHNDSFIESDDISKLKTISNNSGGIQGGISNGENIEMKIAFKPTATIGKEQKTVNADGKEVLMKAKGRHDPCVLPRAVPMVDSMVALVLADHLLLHQAQCSIIK</sequence>
<accession>Q7V364</accession>
<comment type="function">
    <text evidence="1">Catalyzes the anti-1,4-elimination of the C-3 phosphate and the C-6 proR hydrogen from 5-enolpyruvylshikimate-3-phosphate (EPSP) to yield chorismate, which is the branch point compound that serves as the starting substrate for the three terminal pathways of aromatic amino acid biosynthesis. This reaction introduces a second double bond into the aromatic ring system.</text>
</comment>
<comment type="catalytic activity">
    <reaction evidence="1">
        <text>5-O-(1-carboxyvinyl)-3-phosphoshikimate = chorismate + phosphate</text>
        <dbReference type="Rhea" id="RHEA:21020"/>
        <dbReference type="ChEBI" id="CHEBI:29748"/>
        <dbReference type="ChEBI" id="CHEBI:43474"/>
        <dbReference type="ChEBI" id="CHEBI:57701"/>
        <dbReference type="EC" id="4.2.3.5"/>
    </reaction>
</comment>
<comment type="cofactor">
    <cofactor evidence="1">
        <name>FMNH2</name>
        <dbReference type="ChEBI" id="CHEBI:57618"/>
    </cofactor>
    <text evidence="1">Reduced FMN (FMNH(2)).</text>
</comment>
<comment type="pathway">
    <text evidence="1">Metabolic intermediate biosynthesis; chorismate biosynthesis; chorismate from D-erythrose 4-phosphate and phosphoenolpyruvate: step 7/7.</text>
</comment>
<comment type="subunit">
    <text evidence="1">Homotetramer.</text>
</comment>
<comment type="similarity">
    <text evidence="1">Belongs to the chorismate synthase family.</text>
</comment>